<accession>Q6XTB6</accession>
<dbReference type="EC" id="3.1.-.-" evidence="2"/>
<dbReference type="EMBL" id="AY210196">
    <property type="protein sequence ID" value="AAO46510.1"/>
    <property type="molecule type" value="Genomic_RNA"/>
</dbReference>
<dbReference type="SMR" id="Q6XTB6"/>
<dbReference type="MEROPS" id="S62.001"/>
<dbReference type="GO" id="GO:0030430">
    <property type="term" value="C:host cell cytoplasm"/>
    <property type="evidence" value="ECO:0007669"/>
    <property type="project" value="UniProtKB-SubCell"/>
</dbReference>
<dbReference type="GO" id="GO:0042025">
    <property type="term" value="C:host cell nucleus"/>
    <property type="evidence" value="ECO:0007669"/>
    <property type="project" value="UniProtKB-SubCell"/>
</dbReference>
<dbReference type="GO" id="GO:0004519">
    <property type="term" value="F:endonuclease activity"/>
    <property type="evidence" value="ECO:0007669"/>
    <property type="project" value="UniProtKB-KW"/>
</dbReference>
<dbReference type="GO" id="GO:0046872">
    <property type="term" value="F:metal ion binding"/>
    <property type="evidence" value="ECO:0007669"/>
    <property type="project" value="UniProtKB-KW"/>
</dbReference>
<dbReference type="GO" id="GO:0003723">
    <property type="term" value="F:RNA binding"/>
    <property type="evidence" value="ECO:0007669"/>
    <property type="project" value="UniProtKB-UniRule"/>
</dbReference>
<dbReference type="GO" id="GO:0075526">
    <property type="term" value="P:cap snatching"/>
    <property type="evidence" value="ECO:0007669"/>
    <property type="project" value="UniProtKB-UniRule"/>
</dbReference>
<dbReference type="GO" id="GO:0006351">
    <property type="term" value="P:DNA-templated transcription"/>
    <property type="evidence" value="ECO:0007669"/>
    <property type="project" value="UniProtKB-UniRule"/>
</dbReference>
<dbReference type="GO" id="GO:0039657">
    <property type="term" value="P:symbiont-mediated suppression of host gene expression"/>
    <property type="evidence" value="ECO:0007669"/>
    <property type="project" value="UniProtKB-KW"/>
</dbReference>
<dbReference type="GO" id="GO:0039523">
    <property type="term" value="P:symbiont-mediated suppression of host mRNA transcription via inhibition of RNA polymerase II activity"/>
    <property type="evidence" value="ECO:0007669"/>
    <property type="project" value="UniProtKB-UniRule"/>
</dbReference>
<dbReference type="GO" id="GO:0039694">
    <property type="term" value="P:viral RNA genome replication"/>
    <property type="evidence" value="ECO:0007669"/>
    <property type="project" value="InterPro"/>
</dbReference>
<dbReference type="GO" id="GO:0075523">
    <property type="term" value="P:viral translational frameshifting"/>
    <property type="evidence" value="ECO:0007669"/>
    <property type="project" value="UniProtKB-KW"/>
</dbReference>
<dbReference type="FunFam" id="3.40.91.90:FF:000001">
    <property type="entry name" value="Polymerase acidic protein"/>
    <property type="match status" value="1"/>
</dbReference>
<dbReference type="Gene3D" id="3.40.91.90">
    <property type="entry name" value="Influenza RNA-dependent RNA polymerase subunit PA, endonuclease domain"/>
    <property type="match status" value="1"/>
</dbReference>
<dbReference type="HAMAP" id="MF_04063">
    <property type="entry name" value="INFV_PA"/>
    <property type="match status" value="1"/>
</dbReference>
<dbReference type="InterPro" id="IPR037534">
    <property type="entry name" value="INFV_PA"/>
</dbReference>
<dbReference type="InterPro" id="IPR001009">
    <property type="entry name" value="PA/PA-X"/>
</dbReference>
<dbReference type="InterPro" id="IPR038372">
    <property type="entry name" value="PA/PA-X_sf"/>
</dbReference>
<dbReference type="Pfam" id="PF00603">
    <property type="entry name" value="Flu_PA"/>
    <property type="match status" value="1"/>
</dbReference>
<organismHost>
    <name type="scientific">Aves</name>
    <dbReference type="NCBI Taxonomy" id="8782"/>
</organismHost>
<organismHost>
    <name type="scientific">Homo sapiens</name>
    <name type="common">Human</name>
    <dbReference type="NCBI Taxonomy" id="9606"/>
</organismHost>
<organismHost>
    <name type="scientific">Mysticeti</name>
    <name type="common">baleen whales</name>
    <dbReference type="NCBI Taxonomy" id="9761"/>
</organismHost>
<organismHost>
    <name type="scientific">Phocidae</name>
    <name type="common">true seals</name>
    <dbReference type="NCBI Taxonomy" id="9709"/>
</organismHost>
<organismHost>
    <name type="scientific">Sus scrofa</name>
    <name type="common">Pig</name>
    <dbReference type="NCBI Taxonomy" id="9823"/>
</organismHost>
<gene>
    <name evidence="2" type="primary">PA</name>
</gene>
<comment type="function">
    <text evidence="2">Plays an essential role in viral RNA transcription and replication by forming the heterotrimeric polymerase complex together with PB1 and PB2 subunits. The complex transcribes viral mRNAs by using a unique mechanism called cap-snatching. It consists in the hijacking and cleavage of host capped pre-mRNAs. These short capped RNAs are then used as primers for viral mRNAs. The PB2 subunit is responsible for the binding of the 5' cap of cellular pre-mRNAs which are subsequently cleaved after 10-13 nucleotides by the PA subunit that carries the endonuclease activity.</text>
</comment>
<comment type="cofactor">
    <cofactor evidence="2">
        <name>Mn(2+)</name>
        <dbReference type="ChEBI" id="CHEBI:29035"/>
    </cofactor>
    <text evidence="2">Binds 2 manganese ions per subunit.</text>
</comment>
<comment type="subunit">
    <text evidence="1 2">Influenza RNA polymerase is composed of three subunits: PB1, PB2 and PA. Interacts (via C-terminus) with PB1 (via N-terminus).</text>
</comment>
<comment type="subcellular location">
    <subcellularLocation>
        <location evidence="2">Host cytoplasm</location>
    </subcellularLocation>
    <subcellularLocation>
        <location evidence="2">Host nucleus</location>
    </subcellularLocation>
    <text evidence="1 2">PB1 and PA are transported in the host nucleus as a complex.</text>
</comment>
<comment type="alternative products">
    <event type="ribosomal frameshifting"/>
    <isoform>
        <id>Q6XTB6-1</id>
        <name>PA</name>
        <sequence type="displayed"/>
    </isoform>
    <isoform>
        <id>P0CK85-1</id>
        <name>PA-X</name>
        <sequence type="external"/>
    </isoform>
</comment>
<comment type="PTM">
    <text evidence="1 2">Phosphorylated on serines and threonines by host kinases, including human casein kinase II.</text>
</comment>
<comment type="similarity">
    <text evidence="2">Belongs to the influenza viruses PA family.</text>
</comment>
<keyword id="KW-1157">Cap snatching</keyword>
<keyword id="KW-0255">Endonuclease</keyword>
<keyword id="KW-1262">Eukaryotic host gene expression shutoff by virus</keyword>
<keyword id="KW-1191">Eukaryotic host transcription shutoff by virus</keyword>
<keyword id="KW-1035">Host cytoplasm</keyword>
<keyword id="KW-1190">Host gene expression shutoff by virus</keyword>
<keyword id="KW-1048">Host nucleus</keyword>
<keyword id="KW-0945">Host-virus interaction</keyword>
<keyword id="KW-0378">Hydrolase</keyword>
<keyword id="KW-1104">Inhibition of host RNA polymerase II by virus</keyword>
<keyword id="KW-0464">Manganese</keyword>
<keyword id="KW-0479">Metal-binding</keyword>
<keyword id="KW-0540">Nuclease</keyword>
<keyword id="KW-0597">Phosphoprotein</keyword>
<keyword id="KW-0688">Ribosomal frameshifting</keyword>
<protein>
    <recommendedName>
        <fullName evidence="2">Polymerase acidic protein</fullName>
        <ecNumber evidence="2">3.1.-.-</ecNumber>
    </recommendedName>
    <alternativeName>
        <fullName evidence="2">RNA-directed RNA polymerase subunit P2</fullName>
    </alternativeName>
</protein>
<feature type="chain" id="PRO_0000279245" description="Polymerase acidic protein">
    <location>
        <begin position="1"/>
        <end position="716"/>
    </location>
</feature>
<feature type="short sequence motif" description="Nuclear localization signal 1 (NLS1)" evidence="1 2">
    <location>
        <begin position="124"/>
        <end position="139"/>
    </location>
</feature>
<feature type="short sequence motif" description="Nuclear localization signal 2 (NLS2)" evidence="1 2">
    <location>
        <begin position="184"/>
        <end position="247"/>
    </location>
</feature>
<feature type="binding site" evidence="2">
    <location>
        <position position="41"/>
    </location>
    <ligand>
        <name>Mn(2+)</name>
        <dbReference type="ChEBI" id="CHEBI:29035"/>
        <label>1</label>
    </ligand>
</feature>
<feature type="binding site" evidence="2">
    <location>
        <position position="80"/>
    </location>
    <ligand>
        <name>Mn(2+)</name>
        <dbReference type="ChEBI" id="CHEBI:29035"/>
        <label>2</label>
    </ligand>
</feature>
<feature type="binding site" evidence="2">
    <location>
        <position position="108"/>
    </location>
    <ligand>
        <name>Mn(2+)</name>
        <dbReference type="ChEBI" id="CHEBI:29035"/>
        <label>1</label>
    </ligand>
</feature>
<feature type="binding site" evidence="2">
    <location>
        <position position="108"/>
    </location>
    <ligand>
        <name>Mn(2+)</name>
        <dbReference type="ChEBI" id="CHEBI:29035"/>
        <label>2</label>
    </ligand>
</feature>
<feature type="binding site" evidence="2">
    <location>
        <position position="119"/>
    </location>
    <ligand>
        <name>Mn(2+)</name>
        <dbReference type="ChEBI" id="CHEBI:29035"/>
        <label>1</label>
    </ligand>
</feature>
<feature type="binding site" evidence="2">
    <location>
        <position position="120"/>
    </location>
    <ligand>
        <name>Mn(2+)</name>
        <dbReference type="ChEBI" id="CHEBI:29035"/>
        <label>1</label>
    </ligand>
</feature>
<sequence length="716" mass="82932">MEDFVRQCFNPMIVELAEKAMKEYGEDLKIETNKFAAICTHLEVCFMYSDFHFINEQGESIVVELDDPNALLKHRFEIIEGRDRTMAWTVVNSICNTTGAEKPKFLPDLYDYKENRFIEIGVTRREVHIYYLEKANKIKSENTHIHIFSFTGEEMATKADYTLDEESRARIKTRLFTIRQEMANRGLWDSFRQSERGEETIEERFEITGTMRRLADQSLPPNFSCLENFRAYVDGFEPNGCIEGKLSQMSKEVNARIEPFLKTTPRPIRLPDGPPCFQRSKFLLMDALKLSIEDPSHEGEGIPLYDAIKCMRTFFGWKEPYIVKPHEKGINPNYLLSWKQVLAELQDIENEEKIPRTKNMKKTSQLKWALGENMAPEKVDFDNCRDISDLKQYDSDEPELRSLSSWIQNEFNKACELTDSIWIELDEIGEDVAPIEYIASMRRNYFTAEVSHCRATEYIMKGVYINTALLNASCAAMDDFQLIPMISKCRTKEGRRKTNLYGFIIKGRSHLRNDTDVVNFVSMEFSLTDPRLEPHKWEKYCVLEIGDMILRSAIGQMSRPMFLYVRTNGTSKIKMKWGMEMRRCLLQSLQQIESMIEAESSVKEKDMTKEFFENKSETWPIGESPKGVEEGSIGKVCRTLLAKSVFNSLYASPQLEGFSAESRKLLLVVQALRDNLEPGTFDLGGLYEAIEECLINDPWVLLNASWFNSFLTHALR</sequence>
<proteinExistence type="inferred from homology"/>
<organism>
    <name type="scientific">Influenza A virus (strain A/England/878/1969 H3N2)</name>
    <dbReference type="NCBI Taxonomy" id="387147"/>
    <lineage>
        <taxon>Viruses</taxon>
        <taxon>Riboviria</taxon>
        <taxon>Orthornavirae</taxon>
        <taxon>Negarnaviricota</taxon>
        <taxon>Polyploviricotina</taxon>
        <taxon>Insthoviricetes</taxon>
        <taxon>Articulavirales</taxon>
        <taxon>Orthomyxoviridae</taxon>
        <taxon>Alphainfluenzavirus</taxon>
        <taxon>Alphainfluenzavirus influenzae</taxon>
        <taxon>Influenza A virus</taxon>
    </lineage>
</organism>
<reference key="1">
    <citation type="journal article" date="2004" name="Virology">
        <title>Genetic analysis of human H2N2 and early H3N2 influenza viruses, 1957-1972: evidence for genetic divergence and multiple reassortment events.</title>
        <authorList>
            <person name="Lindstrom S.E."/>
            <person name="Cox N.J."/>
            <person name="Klimov A."/>
        </authorList>
    </citation>
    <scope>NUCLEOTIDE SEQUENCE [GENOMIC RNA]</scope>
</reference>
<name>PA_I69A0</name>
<evidence type="ECO:0000250" key="1">
    <source>
        <dbReference type="UniProtKB" id="P03433"/>
    </source>
</evidence>
<evidence type="ECO:0000255" key="2">
    <source>
        <dbReference type="HAMAP-Rule" id="MF_04063"/>
    </source>
</evidence>